<keyword id="KW-1015">Disulfide bond</keyword>
<keyword id="KW-0325">Glycoprotein</keyword>
<keyword id="KW-1199">Hemostasis impairing toxin</keyword>
<keyword id="KW-0378">Hydrolase</keyword>
<keyword id="KW-0645">Protease</keyword>
<keyword id="KW-0964">Secreted</keyword>
<keyword id="KW-0720">Serine protease</keyword>
<keyword id="KW-0732">Signal</keyword>
<keyword id="KW-0800">Toxin</keyword>
<keyword id="KW-0865">Zymogen</keyword>
<accession>O13059</accession>
<dbReference type="EC" id="3.4.21.-"/>
<dbReference type="EMBL" id="D67081">
    <property type="protein sequence ID" value="BAA19979.1"/>
    <property type="molecule type" value="mRNA"/>
</dbReference>
<dbReference type="SMR" id="O13059"/>
<dbReference type="MEROPS" id="S01.347"/>
<dbReference type="GlyCosmos" id="O13059">
    <property type="glycosylation" value="1 site, No reported glycans"/>
</dbReference>
<dbReference type="GO" id="GO:0005576">
    <property type="term" value="C:extracellular region"/>
    <property type="evidence" value="ECO:0007669"/>
    <property type="project" value="UniProtKB-SubCell"/>
</dbReference>
<dbReference type="GO" id="GO:0030141">
    <property type="term" value="C:secretory granule"/>
    <property type="evidence" value="ECO:0007669"/>
    <property type="project" value="TreeGrafter"/>
</dbReference>
<dbReference type="GO" id="GO:0004252">
    <property type="term" value="F:serine-type endopeptidase activity"/>
    <property type="evidence" value="ECO:0007669"/>
    <property type="project" value="InterPro"/>
</dbReference>
<dbReference type="GO" id="GO:0090729">
    <property type="term" value="F:toxin activity"/>
    <property type="evidence" value="ECO:0007669"/>
    <property type="project" value="UniProtKB-KW"/>
</dbReference>
<dbReference type="GO" id="GO:0006508">
    <property type="term" value="P:proteolysis"/>
    <property type="evidence" value="ECO:0007669"/>
    <property type="project" value="UniProtKB-KW"/>
</dbReference>
<dbReference type="CDD" id="cd00190">
    <property type="entry name" value="Tryp_SPc"/>
    <property type="match status" value="1"/>
</dbReference>
<dbReference type="FunFam" id="2.40.10.10:FF:000158">
    <property type="entry name" value="Thrombin-like enzyme saxthrombin"/>
    <property type="match status" value="1"/>
</dbReference>
<dbReference type="FunFam" id="2.40.10.10:FF:000153">
    <property type="entry name" value="Venom plasminogen activator TSV-PA"/>
    <property type="match status" value="1"/>
</dbReference>
<dbReference type="Gene3D" id="2.40.10.10">
    <property type="entry name" value="Trypsin-like serine proteases"/>
    <property type="match status" value="2"/>
</dbReference>
<dbReference type="InterPro" id="IPR009003">
    <property type="entry name" value="Peptidase_S1_PA"/>
</dbReference>
<dbReference type="InterPro" id="IPR043504">
    <property type="entry name" value="Peptidase_S1_PA_chymotrypsin"/>
</dbReference>
<dbReference type="InterPro" id="IPR001314">
    <property type="entry name" value="Peptidase_S1A"/>
</dbReference>
<dbReference type="InterPro" id="IPR001254">
    <property type="entry name" value="Trypsin_dom"/>
</dbReference>
<dbReference type="InterPro" id="IPR018114">
    <property type="entry name" value="TRYPSIN_HIS"/>
</dbReference>
<dbReference type="InterPro" id="IPR033116">
    <property type="entry name" value="TRYPSIN_SER"/>
</dbReference>
<dbReference type="PANTHER" id="PTHR24271:SF47">
    <property type="entry name" value="KALLIKREIN-1"/>
    <property type="match status" value="1"/>
</dbReference>
<dbReference type="PANTHER" id="PTHR24271">
    <property type="entry name" value="KALLIKREIN-RELATED"/>
    <property type="match status" value="1"/>
</dbReference>
<dbReference type="Pfam" id="PF00089">
    <property type="entry name" value="Trypsin"/>
    <property type="match status" value="1"/>
</dbReference>
<dbReference type="PRINTS" id="PR00722">
    <property type="entry name" value="CHYMOTRYPSIN"/>
</dbReference>
<dbReference type="SMART" id="SM00020">
    <property type="entry name" value="Tryp_SPc"/>
    <property type="match status" value="1"/>
</dbReference>
<dbReference type="SUPFAM" id="SSF50494">
    <property type="entry name" value="Trypsin-like serine proteases"/>
    <property type="match status" value="1"/>
</dbReference>
<dbReference type="PROSITE" id="PS50240">
    <property type="entry name" value="TRYPSIN_DOM"/>
    <property type="match status" value="1"/>
</dbReference>
<dbReference type="PROSITE" id="PS00134">
    <property type="entry name" value="TRYPSIN_HIS"/>
    <property type="match status" value="1"/>
</dbReference>
<dbReference type="PROSITE" id="PS00135">
    <property type="entry name" value="TRYPSIN_SER"/>
    <property type="match status" value="1"/>
</dbReference>
<reference key="1">
    <citation type="journal article" date="1996" name="FEBS Lett.">
        <title>Accelerated evolution of crotalinae snake venom gland serine proteases.</title>
        <authorList>
            <person name="Deshimaru M."/>
            <person name="Ogawa T."/>
            <person name="Nakashima K."/>
            <person name="Nobuhisa I."/>
            <person name="Chijiwa T."/>
            <person name="Shimohigashi Y."/>
            <person name="Fukumaki Y."/>
            <person name="Niwa M."/>
            <person name="Yamashina I."/>
            <person name="Hattori S."/>
            <person name="Ohno M."/>
        </authorList>
    </citation>
    <scope>NUCLEOTIDE SEQUENCE [MRNA]</scope>
    <source>
        <tissue>Venom gland</tissue>
    </source>
</reference>
<organism>
    <name type="scientific">Craspedocephalus gramineus</name>
    <name type="common">Bamboo pit viper</name>
    <name type="synonym">Trimeresurus gramineus</name>
    <dbReference type="NCBI Taxonomy" id="8767"/>
    <lineage>
        <taxon>Eukaryota</taxon>
        <taxon>Metazoa</taxon>
        <taxon>Chordata</taxon>
        <taxon>Craniata</taxon>
        <taxon>Vertebrata</taxon>
        <taxon>Euteleostomi</taxon>
        <taxon>Lepidosauria</taxon>
        <taxon>Squamata</taxon>
        <taxon>Bifurcata</taxon>
        <taxon>Unidentata</taxon>
        <taxon>Episquamata</taxon>
        <taxon>Toxicofera</taxon>
        <taxon>Serpentes</taxon>
        <taxon>Colubroidea</taxon>
        <taxon>Viperidae</taxon>
        <taxon>Crotalinae</taxon>
        <taxon>Craspedocephalus</taxon>
    </lineage>
</organism>
<protein>
    <recommendedName>
        <fullName>Snake venom serine protease 1</fullName>
        <shortName>SVSP 1</shortName>
        <ecNumber>3.4.21.-</ecNumber>
    </recommendedName>
</protein>
<proteinExistence type="evidence at transcript level"/>
<evidence type="ECO:0000250" key="1"/>
<evidence type="ECO:0000255" key="2"/>
<evidence type="ECO:0000255" key="3">
    <source>
        <dbReference type="PROSITE-ProRule" id="PRU00274"/>
    </source>
</evidence>
<comment type="function">
    <text evidence="1">Snake venom serine protease that may act in the hemostasis system of the prey.</text>
</comment>
<comment type="subunit">
    <text evidence="1">Monomer.</text>
</comment>
<comment type="subcellular location">
    <subcellularLocation>
        <location>Secreted</location>
    </subcellularLocation>
</comment>
<comment type="tissue specificity">
    <text>Expressed by the venom gland.</text>
</comment>
<comment type="similarity">
    <text evidence="3">Belongs to the peptidase S1 family. Snake venom subfamily.</text>
</comment>
<feature type="signal peptide" evidence="1">
    <location>
        <begin position="1"/>
        <end position="18"/>
    </location>
</feature>
<feature type="propeptide" id="PRO_0000028391" evidence="1">
    <location>
        <begin position="19"/>
        <end position="24"/>
    </location>
</feature>
<feature type="chain" id="PRO_0000028392" description="Snake venom serine protease 1">
    <location>
        <begin position="25"/>
        <end position="258"/>
    </location>
</feature>
<feature type="domain" description="Peptidase S1" evidence="3">
    <location>
        <begin position="25"/>
        <end position="249"/>
    </location>
</feature>
<feature type="active site" description="Charge relay system" evidence="1">
    <location>
        <position position="65"/>
    </location>
</feature>
<feature type="active site" description="Charge relay system" evidence="1">
    <location>
        <position position="110"/>
    </location>
</feature>
<feature type="active site" description="Charge relay system" evidence="1">
    <location>
        <position position="204"/>
    </location>
</feature>
<feature type="glycosylation site" description="N-linked (GlcNAc...) asparagine" evidence="2">
    <location>
        <position position="44"/>
    </location>
</feature>
<feature type="disulfide bond" evidence="3">
    <location>
        <begin position="31"/>
        <end position="163"/>
    </location>
</feature>
<feature type="disulfide bond" evidence="3">
    <location>
        <begin position="50"/>
        <end position="66"/>
    </location>
</feature>
<feature type="disulfide bond" evidence="3">
    <location>
        <begin position="98"/>
        <end position="256"/>
    </location>
</feature>
<feature type="disulfide bond" evidence="3">
    <location>
        <begin position="142"/>
        <end position="210"/>
    </location>
</feature>
<feature type="disulfide bond" evidence="3">
    <location>
        <begin position="174"/>
        <end position="189"/>
    </location>
</feature>
<feature type="disulfide bond" evidence="3">
    <location>
        <begin position="200"/>
        <end position="225"/>
    </location>
</feature>
<name>VSP1_CRAGM</name>
<sequence length="258" mass="27941">MVLIRVLANLLILQLSYAQKSSELVVGGDECNINEHRSLVAIFNSTGFFCSGTLINQEWVVTAAHCDSNNFKMKFGAHSQKVLNEDEQIRNPKEKFICPNKKNNEVLDKDIMLIKLDSSVSNSEHIAPLSLPSSPPSVGSVCRIMGWGSITPTKVTYPDVPYCANINLLDDAECKPGYPELLPEYRTLCAGIVQGGKDTCGGDSGGPLICNGQFHGIVSYGAHPCGQSLKPGIYTTVFDYNDWIKSIIAGNTAATCPP</sequence>
<gene>
    <name type="primary">TLG1</name>
</gene>